<gene>
    <name evidence="1" type="primary">gatB</name>
    <name type="ordered locus">PMM0048</name>
</gene>
<organism>
    <name type="scientific">Prochlorococcus marinus subsp. pastoris (strain CCMP1986 / NIES-2087 / MED4)</name>
    <dbReference type="NCBI Taxonomy" id="59919"/>
    <lineage>
        <taxon>Bacteria</taxon>
        <taxon>Bacillati</taxon>
        <taxon>Cyanobacteriota</taxon>
        <taxon>Cyanophyceae</taxon>
        <taxon>Synechococcales</taxon>
        <taxon>Prochlorococcaceae</taxon>
        <taxon>Prochlorococcus</taxon>
    </lineage>
</organism>
<keyword id="KW-0067">ATP-binding</keyword>
<keyword id="KW-0436">Ligase</keyword>
<keyword id="KW-0547">Nucleotide-binding</keyword>
<keyword id="KW-0648">Protein biosynthesis</keyword>
<protein>
    <recommendedName>
        <fullName evidence="1">Aspartyl/glutamyl-tRNA(Asn/Gln) amidotransferase subunit B</fullName>
        <shortName evidence="1">Asp/Glu-ADT subunit B</shortName>
        <ecNumber evidence="1">6.3.5.-</ecNumber>
    </recommendedName>
</protein>
<proteinExistence type="inferred from homology"/>
<reference key="1">
    <citation type="journal article" date="2003" name="Nature">
        <title>Genome divergence in two Prochlorococcus ecotypes reflects oceanic niche differentiation.</title>
        <authorList>
            <person name="Rocap G."/>
            <person name="Larimer F.W."/>
            <person name="Lamerdin J.E."/>
            <person name="Malfatti S."/>
            <person name="Chain P."/>
            <person name="Ahlgren N.A."/>
            <person name="Arellano A."/>
            <person name="Coleman M."/>
            <person name="Hauser L."/>
            <person name="Hess W.R."/>
            <person name="Johnson Z.I."/>
            <person name="Land M.L."/>
            <person name="Lindell D."/>
            <person name="Post A.F."/>
            <person name="Regala W."/>
            <person name="Shah M."/>
            <person name="Shaw S.L."/>
            <person name="Steglich C."/>
            <person name="Sullivan M.B."/>
            <person name="Ting C.S."/>
            <person name="Tolonen A."/>
            <person name="Webb E.A."/>
            <person name="Zinser E.R."/>
            <person name="Chisholm S.W."/>
        </authorList>
    </citation>
    <scope>NUCLEOTIDE SEQUENCE [LARGE SCALE GENOMIC DNA]</scope>
    <source>
        <strain>CCMP1986 / NIES-2087 / MED4</strain>
    </source>
</reference>
<name>GATB_PROMP</name>
<dbReference type="EC" id="6.3.5.-" evidence="1"/>
<dbReference type="EMBL" id="BX548174">
    <property type="protein sequence ID" value="CAE18507.1"/>
    <property type="molecule type" value="Genomic_DNA"/>
</dbReference>
<dbReference type="RefSeq" id="WP_011131686.1">
    <property type="nucleotide sequence ID" value="NC_005072.1"/>
</dbReference>
<dbReference type="SMR" id="Q7V3M7"/>
<dbReference type="STRING" id="59919.PMM0048"/>
<dbReference type="KEGG" id="pmm:PMM0048"/>
<dbReference type="eggNOG" id="COG0064">
    <property type="taxonomic scope" value="Bacteria"/>
</dbReference>
<dbReference type="HOGENOM" id="CLU_019240_0_0_3"/>
<dbReference type="OrthoDB" id="9804078at2"/>
<dbReference type="Proteomes" id="UP000001026">
    <property type="component" value="Chromosome"/>
</dbReference>
<dbReference type="GO" id="GO:0050566">
    <property type="term" value="F:asparaginyl-tRNA synthase (glutamine-hydrolyzing) activity"/>
    <property type="evidence" value="ECO:0007669"/>
    <property type="project" value="RHEA"/>
</dbReference>
<dbReference type="GO" id="GO:0005524">
    <property type="term" value="F:ATP binding"/>
    <property type="evidence" value="ECO:0007669"/>
    <property type="project" value="UniProtKB-KW"/>
</dbReference>
<dbReference type="GO" id="GO:0050567">
    <property type="term" value="F:glutaminyl-tRNA synthase (glutamine-hydrolyzing) activity"/>
    <property type="evidence" value="ECO:0007669"/>
    <property type="project" value="UniProtKB-UniRule"/>
</dbReference>
<dbReference type="GO" id="GO:0070681">
    <property type="term" value="P:glutaminyl-tRNAGln biosynthesis via transamidation"/>
    <property type="evidence" value="ECO:0007669"/>
    <property type="project" value="TreeGrafter"/>
</dbReference>
<dbReference type="GO" id="GO:0006412">
    <property type="term" value="P:translation"/>
    <property type="evidence" value="ECO:0007669"/>
    <property type="project" value="UniProtKB-UniRule"/>
</dbReference>
<dbReference type="FunFam" id="1.10.10.410:FF:000001">
    <property type="entry name" value="Aspartyl/glutamyl-tRNA(Asn/Gln) amidotransferase subunit B"/>
    <property type="match status" value="1"/>
</dbReference>
<dbReference type="FunFam" id="1.10.150.380:FF:000001">
    <property type="entry name" value="Aspartyl/glutamyl-tRNA(Asn/Gln) amidotransferase subunit B"/>
    <property type="match status" value="1"/>
</dbReference>
<dbReference type="Gene3D" id="1.10.10.410">
    <property type="match status" value="1"/>
</dbReference>
<dbReference type="Gene3D" id="1.10.150.380">
    <property type="entry name" value="GatB domain, N-terminal subdomain"/>
    <property type="match status" value="1"/>
</dbReference>
<dbReference type="HAMAP" id="MF_00121">
    <property type="entry name" value="GatB"/>
    <property type="match status" value="1"/>
</dbReference>
<dbReference type="InterPro" id="IPR017959">
    <property type="entry name" value="Asn/Gln-tRNA_amidoTrfase_suB/E"/>
</dbReference>
<dbReference type="InterPro" id="IPR006075">
    <property type="entry name" value="Asn/Gln-tRNA_Trfase_suB/E_cat"/>
</dbReference>
<dbReference type="InterPro" id="IPR018027">
    <property type="entry name" value="Asn/Gln_amidotransferase"/>
</dbReference>
<dbReference type="InterPro" id="IPR003789">
    <property type="entry name" value="Asn/Gln_tRNA_amidoTrase-B-like"/>
</dbReference>
<dbReference type="InterPro" id="IPR004413">
    <property type="entry name" value="GatB"/>
</dbReference>
<dbReference type="InterPro" id="IPR042114">
    <property type="entry name" value="GatB_C_1"/>
</dbReference>
<dbReference type="InterPro" id="IPR023168">
    <property type="entry name" value="GatB_Yqey_C_2"/>
</dbReference>
<dbReference type="InterPro" id="IPR017958">
    <property type="entry name" value="Gln-tRNA_amidoTrfase_suB_CS"/>
</dbReference>
<dbReference type="InterPro" id="IPR014746">
    <property type="entry name" value="Gln_synth/guanido_kin_cat_dom"/>
</dbReference>
<dbReference type="NCBIfam" id="TIGR00133">
    <property type="entry name" value="gatB"/>
    <property type="match status" value="1"/>
</dbReference>
<dbReference type="NCBIfam" id="NF004012">
    <property type="entry name" value="PRK05477.1-2"/>
    <property type="match status" value="1"/>
</dbReference>
<dbReference type="NCBIfam" id="NF004014">
    <property type="entry name" value="PRK05477.1-4"/>
    <property type="match status" value="1"/>
</dbReference>
<dbReference type="PANTHER" id="PTHR11659">
    <property type="entry name" value="GLUTAMYL-TRNA GLN AMIDOTRANSFERASE SUBUNIT B MITOCHONDRIAL AND PROKARYOTIC PET112-RELATED"/>
    <property type="match status" value="1"/>
</dbReference>
<dbReference type="PANTHER" id="PTHR11659:SF0">
    <property type="entry name" value="GLUTAMYL-TRNA(GLN) AMIDOTRANSFERASE SUBUNIT B, MITOCHONDRIAL"/>
    <property type="match status" value="1"/>
</dbReference>
<dbReference type="Pfam" id="PF02934">
    <property type="entry name" value="GatB_N"/>
    <property type="match status" value="1"/>
</dbReference>
<dbReference type="Pfam" id="PF02637">
    <property type="entry name" value="GatB_Yqey"/>
    <property type="match status" value="1"/>
</dbReference>
<dbReference type="SMART" id="SM00845">
    <property type="entry name" value="GatB_Yqey"/>
    <property type="match status" value="1"/>
</dbReference>
<dbReference type="SUPFAM" id="SSF89095">
    <property type="entry name" value="GatB/YqeY motif"/>
    <property type="match status" value="1"/>
</dbReference>
<dbReference type="SUPFAM" id="SSF55931">
    <property type="entry name" value="Glutamine synthetase/guanido kinase"/>
    <property type="match status" value="1"/>
</dbReference>
<dbReference type="PROSITE" id="PS01234">
    <property type="entry name" value="GATB"/>
    <property type="match status" value="1"/>
</dbReference>
<sequence length="490" mass="55203">MKNLEPWEAVIGLETHVQLNTKSKIFTAASTAFGDEPNTHIDPVVCGLPGTLPVLNKTVLEYAVKTSLALNLNVAEHCKFDRKQYFYPDLPKNYQISQFDEPLAENGWLEVEIAEKDKETYLKKIGIERLHMEEDAGKLVHIGSDRLAGSKYSLVDYNRAGIALVEIVSKPDIRTGREASEYASEIRRTVRYLGVSDGNMQEGSLRCDVNISVRRGPNAPFGTKVEIKNMNSFSAIQKACEYEIERQIDVYENGGEIYQETRLWDEAKQLTKSMRLKEGSSDYRYFPDPDLGPIEISKEQKDQWLDELPELPSKKRQKYVKELGLSPYDSRVISDEVFMANFFEETVANGADPKLASNWITSDIVGYLKSNKQSFAELKLSPINLAEMINMISKKVISGKIAKEILPELIQDNISPQKVVEEKGLAMISDSASISPIIEELIIEYPKEVKSFKDGKTKLLGFFVGQLMKKTKGKADPKLANKLISEKLNS</sequence>
<evidence type="ECO:0000255" key="1">
    <source>
        <dbReference type="HAMAP-Rule" id="MF_00121"/>
    </source>
</evidence>
<accession>Q7V3M7</accession>
<comment type="function">
    <text evidence="1">Allows the formation of correctly charged Asn-tRNA(Asn) or Gln-tRNA(Gln) through the transamidation of misacylated Asp-tRNA(Asn) or Glu-tRNA(Gln) in organisms which lack either or both of asparaginyl-tRNA or glutaminyl-tRNA synthetases. The reaction takes place in the presence of glutamine and ATP through an activated phospho-Asp-tRNA(Asn) or phospho-Glu-tRNA(Gln).</text>
</comment>
<comment type="catalytic activity">
    <reaction evidence="1">
        <text>L-glutamyl-tRNA(Gln) + L-glutamine + ATP + H2O = L-glutaminyl-tRNA(Gln) + L-glutamate + ADP + phosphate + H(+)</text>
        <dbReference type="Rhea" id="RHEA:17521"/>
        <dbReference type="Rhea" id="RHEA-COMP:9681"/>
        <dbReference type="Rhea" id="RHEA-COMP:9684"/>
        <dbReference type="ChEBI" id="CHEBI:15377"/>
        <dbReference type="ChEBI" id="CHEBI:15378"/>
        <dbReference type="ChEBI" id="CHEBI:29985"/>
        <dbReference type="ChEBI" id="CHEBI:30616"/>
        <dbReference type="ChEBI" id="CHEBI:43474"/>
        <dbReference type="ChEBI" id="CHEBI:58359"/>
        <dbReference type="ChEBI" id="CHEBI:78520"/>
        <dbReference type="ChEBI" id="CHEBI:78521"/>
        <dbReference type="ChEBI" id="CHEBI:456216"/>
    </reaction>
</comment>
<comment type="catalytic activity">
    <reaction evidence="1">
        <text>L-aspartyl-tRNA(Asn) + L-glutamine + ATP + H2O = L-asparaginyl-tRNA(Asn) + L-glutamate + ADP + phosphate + 2 H(+)</text>
        <dbReference type="Rhea" id="RHEA:14513"/>
        <dbReference type="Rhea" id="RHEA-COMP:9674"/>
        <dbReference type="Rhea" id="RHEA-COMP:9677"/>
        <dbReference type="ChEBI" id="CHEBI:15377"/>
        <dbReference type="ChEBI" id="CHEBI:15378"/>
        <dbReference type="ChEBI" id="CHEBI:29985"/>
        <dbReference type="ChEBI" id="CHEBI:30616"/>
        <dbReference type="ChEBI" id="CHEBI:43474"/>
        <dbReference type="ChEBI" id="CHEBI:58359"/>
        <dbReference type="ChEBI" id="CHEBI:78515"/>
        <dbReference type="ChEBI" id="CHEBI:78516"/>
        <dbReference type="ChEBI" id="CHEBI:456216"/>
    </reaction>
</comment>
<comment type="subunit">
    <text evidence="1">Heterotrimer of A, B and C subunits.</text>
</comment>
<comment type="similarity">
    <text evidence="1">Belongs to the GatB/GatE family. GatB subfamily.</text>
</comment>
<feature type="chain" id="PRO_0000148822" description="Aspartyl/glutamyl-tRNA(Asn/Gln) amidotransferase subunit B">
    <location>
        <begin position="1"/>
        <end position="490"/>
    </location>
</feature>